<evidence type="ECO:0000255" key="1">
    <source>
        <dbReference type="HAMAP-Rule" id="MF_00235"/>
    </source>
</evidence>
<evidence type="ECO:0000305" key="2"/>
<comment type="function">
    <text evidence="1">Catalyzes the reversible transfer of the terminal phosphate group between ATP and AMP. Plays an important role in cellular energy homeostasis and in adenine nucleotide metabolism.</text>
</comment>
<comment type="catalytic activity">
    <reaction evidence="1">
        <text>AMP + ATP = 2 ADP</text>
        <dbReference type="Rhea" id="RHEA:12973"/>
        <dbReference type="ChEBI" id="CHEBI:30616"/>
        <dbReference type="ChEBI" id="CHEBI:456215"/>
        <dbReference type="ChEBI" id="CHEBI:456216"/>
        <dbReference type="EC" id="2.7.4.3"/>
    </reaction>
</comment>
<comment type="pathway">
    <text evidence="1">Purine metabolism; AMP biosynthesis via salvage pathway; AMP from ADP: step 1/1.</text>
</comment>
<comment type="subunit">
    <text evidence="1">Monomer.</text>
</comment>
<comment type="subcellular location">
    <subcellularLocation>
        <location evidence="1">Cytoplasm</location>
    </subcellularLocation>
</comment>
<comment type="domain">
    <text evidence="1">Consists of three domains, a large central CORE domain and two small peripheral domains, NMPbind and LID, which undergo movements during catalysis. The LID domain closes over the site of phosphoryl transfer upon ATP binding. Assembling and dissambling the active center during each catalytic cycle provides an effective means to prevent ATP hydrolysis. Some bacteria have evolved a zinc-coordinating structure that stabilizes the LID domain.</text>
</comment>
<comment type="similarity">
    <text evidence="1">Belongs to the adenylate kinase family.</text>
</comment>
<proteinExistence type="inferred from homology"/>
<gene>
    <name evidence="1" type="primary">adk</name>
    <name type="ordered locus">BLi00154</name>
    <name type="ordered locus">BL01030</name>
</gene>
<dbReference type="EC" id="2.7.4.3" evidence="1"/>
<dbReference type="EMBL" id="AE017333">
    <property type="protein sequence ID" value="AAU39128.1"/>
    <property type="molecule type" value="Genomic_DNA"/>
</dbReference>
<dbReference type="EMBL" id="CP000002">
    <property type="protein sequence ID" value="AAU21783.1"/>
    <property type="molecule type" value="Genomic_DNA"/>
</dbReference>
<dbReference type="EMBL" id="X70087">
    <property type="status" value="NOT_ANNOTATED_CDS"/>
    <property type="molecule type" value="Genomic_DNA"/>
</dbReference>
<dbReference type="PIR" id="S34405">
    <property type="entry name" value="S34405"/>
</dbReference>
<dbReference type="RefSeq" id="WP_003178371.1">
    <property type="nucleotide sequence ID" value="NC_006322.1"/>
</dbReference>
<dbReference type="SMR" id="P35140"/>
<dbReference type="STRING" id="279010.BL01030"/>
<dbReference type="KEGG" id="bld:BLi00154"/>
<dbReference type="KEGG" id="bli:BL01030"/>
<dbReference type="eggNOG" id="COG0563">
    <property type="taxonomic scope" value="Bacteria"/>
</dbReference>
<dbReference type="HOGENOM" id="CLU_032354_1_2_9"/>
<dbReference type="UniPathway" id="UPA00588">
    <property type="reaction ID" value="UER00649"/>
</dbReference>
<dbReference type="Proteomes" id="UP000000606">
    <property type="component" value="Chromosome"/>
</dbReference>
<dbReference type="GO" id="GO:0005737">
    <property type="term" value="C:cytoplasm"/>
    <property type="evidence" value="ECO:0007669"/>
    <property type="project" value="UniProtKB-SubCell"/>
</dbReference>
<dbReference type="GO" id="GO:0004017">
    <property type="term" value="F:adenylate kinase activity"/>
    <property type="evidence" value="ECO:0007669"/>
    <property type="project" value="UniProtKB-UniRule"/>
</dbReference>
<dbReference type="GO" id="GO:0005524">
    <property type="term" value="F:ATP binding"/>
    <property type="evidence" value="ECO:0007669"/>
    <property type="project" value="UniProtKB-UniRule"/>
</dbReference>
<dbReference type="GO" id="GO:0008270">
    <property type="term" value="F:zinc ion binding"/>
    <property type="evidence" value="ECO:0007669"/>
    <property type="project" value="UniProtKB-UniRule"/>
</dbReference>
<dbReference type="GO" id="GO:0044209">
    <property type="term" value="P:AMP salvage"/>
    <property type="evidence" value="ECO:0007669"/>
    <property type="project" value="UniProtKB-UniRule"/>
</dbReference>
<dbReference type="CDD" id="cd01428">
    <property type="entry name" value="ADK"/>
    <property type="match status" value="1"/>
</dbReference>
<dbReference type="FunFam" id="3.40.50.300:FF:000106">
    <property type="entry name" value="Adenylate kinase mitochondrial"/>
    <property type="match status" value="1"/>
</dbReference>
<dbReference type="Gene3D" id="3.40.50.300">
    <property type="entry name" value="P-loop containing nucleotide triphosphate hydrolases"/>
    <property type="match status" value="1"/>
</dbReference>
<dbReference type="HAMAP" id="MF_00235">
    <property type="entry name" value="Adenylate_kinase_Adk"/>
    <property type="match status" value="1"/>
</dbReference>
<dbReference type="InterPro" id="IPR006259">
    <property type="entry name" value="Adenyl_kin_sub"/>
</dbReference>
<dbReference type="InterPro" id="IPR000850">
    <property type="entry name" value="Adenylat/UMP-CMP_kin"/>
</dbReference>
<dbReference type="InterPro" id="IPR033690">
    <property type="entry name" value="Adenylat_kinase_CS"/>
</dbReference>
<dbReference type="InterPro" id="IPR007862">
    <property type="entry name" value="Adenylate_kinase_lid-dom"/>
</dbReference>
<dbReference type="InterPro" id="IPR027417">
    <property type="entry name" value="P-loop_NTPase"/>
</dbReference>
<dbReference type="NCBIfam" id="TIGR01351">
    <property type="entry name" value="adk"/>
    <property type="match status" value="1"/>
</dbReference>
<dbReference type="NCBIfam" id="NF001380">
    <property type="entry name" value="PRK00279.1-2"/>
    <property type="match status" value="1"/>
</dbReference>
<dbReference type="NCBIfam" id="NF001381">
    <property type="entry name" value="PRK00279.1-3"/>
    <property type="match status" value="1"/>
</dbReference>
<dbReference type="NCBIfam" id="NF011100">
    <property type="entry name" value="PRK14527.1"/>
    <property type="match status" value="1"/>
</dbReference>
<dbReference type="PANTHER" id="PTHR23359">
    <property type="entry name" value="NUCLEOTIDE KINASE"/>
    <property type="match status" value="1"/>
</dbReference>
<dbReference type="Pfam" id="PF00406">
    <property type="entry name" value="ADK"/>
    <property type="match status" value="1"/>
</dbReference>
<dbReference type="Pfam" id="PF05191">
    <property type="entry name" value="ADK_lid"/>
    <property type="match status" value="1"/>
</dbReference>
<dbReference type="PRINTS" id="PR00094">
    <property type="entry name" value="ADENYLTKNASE"/>
</dbReference>
<dbReference type="SUPFAM" id="SSF52540">
    <property type="entry name" value="P-loop containing nucleoside triphosphate hydrolases"/>
    <property type="match status" value="1"/>
</dbReference>
<dbReference type="PROSITE" id="PS00113">
    <property type="entry name" value="ADENYLATE_KINASE"/>
    <property type="match status" value="1"/>
</dbReference>
<protein>
    <recommendedName>
        <fullName evidence="1">Adenylate kinase</fullName>
        <shortName evidence="1">AK</shortName>
        <ecNumber evidence="1">2.7.4.3</ecNumber>
    </recommendedName>
    <alternativeName>
        <fullName evidence="1">ATP-AMP transphosphorylase</fullName>
    </alternativeName>
    <alternativeName>
        <fullName evidence="1">ATP:AMP phosphotransferase</fullName>
    </alternativeName>
    <alternativeName>
        <fullName evidence="1">Adenylate monophosphate kinase</fullName>
    </alternativeName>
</protein>
<reference key="1">
    <citation type="journal article" date="2004" name="J. Mol. Microbiol. Biotechnol.">
        <title>The complete genome sequence of Bacillus licheniformis DSM13, an organism with great industrial potential.</title>
        <authorList>
            <person name="Veith B."/>
            <person name="Herzberg C."/>
            <person name="Steckel S."/>
            <person name="Feesche J."/>
            <person name="Maurer K.H."/>
            <person name="Ehrenreich P."/>
            <person name="Baeumer S."/>
            <person name="Henne A."/>
            <person name="Liesegang H."/>
            <person name="Merkl R."/>
            <person name="Ehrenreich A."/>
            <person name="Gottschalk G."/>
        </authorList>
    </citation>
    <scope>NUCLEOTIDE SEQUENCE [LARGE SCALE GENOMIC DNA]</scope>
    <source>
        <strain>ATCC 14580 / DSM 13 / JCM 2505 / CCUG 7422 / NBRC 12200 / NCIMB 9375 / NCTC 10341 / NRRL NRS-1264 / Gibson 46</strain>
    </source>
</reference>
<reference key="2">
    <citation type="journal article" date="2004" name="Genome Biol.">
        <title>Complete genome sequence of the industrial bacterium Bacillus licheniformis and comparisons with closely related Bacillus species.</title>
        <authorList>
            <person name="Rey M.W."/>
            <person name="Ramaiya P."/>
            <person name="Nelson B.A."/>
            <person name="Brody-Karpin S.D."/>
            <person name="Zaretsky E.J."/>
            <person name="Tang M."/>
            <person name="Lopez de Leon A."/>
            <person name="Xiang H."/>
            <person name="Gusti V."/>
            <person name="Clausen I.G."/>
            <person name="Olsen P.B."/>
            <person name="Rasmussen M.D."/>
            <person name="Andersen J.T."/>
            <person name="Joergensen P.L."/>
            <person name="Larsen T.S."/>
            <person name="Sorokin A."/>
            <person name="Bolotin A."/>
            <person name="Lapidus A."/>
            <person name="Galleron N."/>
            <person name="Ehrlich S.D."/>
            <person name="Berka R.M."/>
        </authorList>
    </citation>
    <scope>NUCLEOTIDE SEQUENCE [LARGE SCALE GENOMIC DNA]</scope>
    <source>
        <strain>ATCC 14580 / DSM 13 / JCM 2505 / CCUG 7422 / NBRC 12200 / NCIMB 9375 / NCTC 10341 / NRRL NRS-1264 / Gibson 46</strain>
    </source>
</reference>
<reference key="3">
    <citation type="journal article" date="1992" name="Mol. Gen. Genet.">
        <title>Cloning and molecular characterization of the secY genes from Bacillus licheniformis and Staphylococcus carnosus: comparative analysis of nine members of the SecY family.</title>
        <authorList>
            <person name="Tschauder S."/>
            <person name="Driessen A.J.M."/>
            <person name="Freudl R."/>
        </authorList>
    </citation>
    <scope>NUCLEOTIDE SEQUENCE [GENOMIC DNA] OF 1-24</scope>
</reference>
<feature type="chain" id="PRO_0000158727" description="Adenylate kinase">
    <location>
        <begin position="1"/>
        <end position="217"/>
    </location>
</feature>
<feature type="region of interest" description="NMP" evidence="1">
    <location>
        <begin position="30"/>
        <end position="59"/>
    </location>
</feature>
<feature type="region of interest" description="LID" evidence="1">
    <location>
        <begin position="126"/>
        <end position="163"/>
    </location>
</feature>
<feature type="binding site" evidence="1">
    <location>
        <begin position="10"/>
        <end position="15"/>
    </location>
    <ligand>
        <name>ATP</name>
        <dbReference type="ChEBI" id="CHEBI:30616"/>
    </ligand>
</feature>
<feature type="binding site" evidence="1">
    <location>
        <position position="31"/>
    </location>
    <ligand>
        <name>AMP</name>
        <dbReference type="ChEBI" id="CHEBI:456215"/>
    </ligand>
</feature>
<feature type="binding site" evidence="1">
    <location>
        <position position="36"/>
    </location>
    <ligand>
        <name>AMP</name>
        <dbReference type="ChEBI" id="CHEBI:456215"/>
    </ligand>
</feature>
<feature type="binding site" evidence="1">
    <location>
        <begin position="57"/>
        <end position="59"/>
    </location>
    <ligand>
        <name>AMP</name>
        <dbReference type="ChEBI" id="CHEBI:456215"/>
    </ligand>
</feature>
<feature type="binding site" evidence="1">
    <location>
        <begin position="85"/>
        <end position="88"/>
    </location>
    <ligand>
        <name>AMP</name>
        <dbReference type="ChEBI" id="CHEBI:456215"/>
    </ligand>
</feature>
<feature type="binding site" evidence="1">
    <location>
        <position position="92"/>
    </location>
    <ligand>
        <name>AMP</name>
        <dbReference type="ChEBI" id="CHEBI:456215"/>
    </ligand>
</feature>
<feature type="binding site" evidence="1">
    <location>
        <position position="127"/>
    </location>
    <ligand>
        <name>ATP</name>
        <dbReference type="ChEBI" id="CHEBI:30616"/>
    </ligand>
</feature>
<feature type="binding site" evidence="1">
    <location>
        <position position="130"/>
    </location>
    <ligand>
        <name>Zn(2+)</name>
        <dbReference type="ChEBI" id="CHEBI:29105"/>
        <note>structural</note>
    </ligand>
</feature>
<feature type="binding site" evidence="1">
    <location>
        <position position="133"/>
    </location>
    <ligand>
        <name>Zn(2+)</name>
        <dbReference type="ChEBI" id="CHEBI:29105"/>
        <note>structural</note>
    </ligand>
</feature>
<feature type="binding site" evidence="1">
    <location>
        <begin position="136"/>
        <end position="137"/>
    </location>
    <ligand>
        <name>ATP</name>
        <dbReference type="ChEBI" id="CHEBI:30616"/>
    </ligand>
</feature>
<feature type="binding site" evidence="1">
    <location>
        <position position="150"/>
    </location>
    <ligand>
        <name>Zn(2+)</name>
        <dbReference type="ChEBI" id="CHEBI:29105"/>
        <note>structural</note>
    </ligand>
</feature>
<feature type="binding site" evidence="1">
    <location>
        <position position="153"/>
    </location>
    <ligand>
        <name>Zn(2+)</name>
        <dbReference type="ChEBI" id="CHEBI:29105"/>
        <note>structural</note>
    </ligand>
</feature>
<feature type="binding site" evidence="1">
    <location>
        <position position="160"/>
    </location>
    <ligand>
        <name>AMP</name>
        <dbReference type="ChEBI" id="CHEBI:456215"/>
    </ligand>
</feature>
<feature type="binding site" evidence="1">
    <location>
        <position position="171"/>
    </location>
    <ligand>
        <name>AMP</name>
        <dbReference type="ChEBI" id="CHEBI:456215"/>
    </ligand>
</feature>
<feature type="binding site" evidence="1">
    <location>
        <position position="199"/>
    </location>
    <ligand>
        <name>ATP</name>
        <dbReference type="ChEBI" id="CHEBI:30616"/>
    </ligand>
</feature>
<feature type="sequence conflict" description="In Ref. 3." evidence="2" ref="3">
    <original>V</original>
    <variation>D</variation>
    <location>
        <position position="4"/>
    </location>
</feature>
<name>KAD_BACLD</name>
<organism>
    <name type="scientific">Bacillus licheniformis (strain ATCC 14580 / DSM 13 / JCM 2505 / CCUG 7422 / NBRC 12200 / NCIMB 9375 / NCTC 10341 / NRRL NRS-1264 / Gibson 46)</name>
    <dbReference type="NCBI Taxonomy" id="279010"/>
    <lineage>
        <taxon>Bacteria</taxon>
        <taxon>Bacillati</taxon>
        <taxon>Bacillota</taxon>
        <taxon>Bacilli</taxon>
        <taxon>Bacillales</taxon>
        <taxon>Bacillaceae</taxon>
        <taxon>Bacillus</taxon>
    </lineage>
</organism>
<accession>P35140</accession>
<accession>Q65P86</accession>
<keyword id="KW-0067">ATP-binding</keyword>
<keyword id="KW-0963">Cytoplasm</keyword>
<keyword id="KW-0418">Kinase</keyword>
<keyword id="KW-0479">Metal-binding</keyword>
<keyword id="KW-0545">Nucleotide biosynthesis</keyword>
<keyword id="KW-0547">Nucleotide-binding</keyword>
<keyword id="KW-1185">Reference proteome</keyword>
<keyword id="KW-0808">Transferase</keyword>
<keyword id="KW-0862">Zinc</keyword>
<sequence length="217" mass="24044">MNLVLMGLPGAGKGTQAERIVEDFGIPHISTGDMFRAAMKEETDLGLEAKSYIDKGELVPDEVTIGIVRERLGKNDCDGGFLLDGFPRTVAQAEALEEILKGLGKSIDHVINIQVDKDALMERLTGRRICKNCGATYHLVFNPPAKENVCDKCGGELYQREDDNEATVSTRLEVNMKQTQPLLDFYEDKGYLVNIDGQKHINEVYADIKELLGGRDK</sequence>